<reference key="1">
    <citation type="journal article" date="2002" name="Nature">
        <title>The genome sequence of Schizosaccharomyces pombe.</title>
        <authorList>
            <person name="Wood V."/>
            <person name="Gwilliam R."/>
            <person name="Rajandream M.A."/>
            <person name="Lyne M.H."/>
            <person name="Lyne R."/>
            <person name="Stewart A."/>
            <person name="Sgouros J.G."/>
            <person name="Peat N."/>
            <person name="Hayles J."/>
            <person name="Baker S.G."/>
            <person name="Basham D."/>
            <person name="Bowman S."/>
            <person name="Brooks K."/>
            <person name="Brown D."/>
            <person name="Brown S."/>
            <person name="Chillingworth T."/>
            <person name="Churcher C.M."/>
            <person name="Collins M."/>
            <person name="Connor R."/>
            <person name="Cronin A."/>
            <person name="Davis P."/>
            <person name="Feltwell T."/>
            <person name="Fraser A."/>
            <person name="Gentles S."/>
            <person name="Goble A."/>
            <person name="Hamlin N."/>
            <person name="Harris D.E."/>
            <person name="Hidalgo J."/>
            <person name="Hodgson G."/>
            <person name="Holroyd S."/>
            <person name="Hornsby T."/>
            <person name="Howarth S."/>
            <person name="Huckle E.J."/>
            <person name="Hunt S."/>
            <person name="Jagels K."/>
            <person name="James K.D."/>
            <person name="Jones L."/>
            <person name="Jones M."/>
            <person name="Leather S."/>
            <person name="McDonald S."/>
            <person name="McLean J."/>
            <person name="Mooney P."/>
            <person name="Moule S."/>
            <person name="Mungall K.L."/>
            <person name="Murphy L.D."/>
            <person name="Niblett D."/>
            <person name="Odell C."/>
            <person name="Oliver K."/>
            <person name="O'Neil S."/>
            <person name="Pearson D."/>
            <person name="Quail M.A."/>
            <person name="Rabbinowitsch E."/>
            <person name="Rutherford K.M."/>
            <person name="Rutter S."/>
            <person name="Saunders D."/>
            <person name="Seeger K."/>
            <person name="Sharp S."/>
            <person name="Skelton J."/>
            <person name="Simmonds M.N."/>
            <person name="Squares R."/>
            <person name="Squares S."/>
            <person name="Stevens K."/>
            <person name="Taylor K."/>
            <person name="Taylor R.G."/>
            <person name="Tivey A."/>
            <person name="Walsh S.V."/>
            <person name="Warren T."/>
            <person name="Whitehead S."/>
            <person name="Woodward J.R."/>
            <person name="Volckaert G."/>
            <person name="Aert R."/>
            <person name="Robben J."/>
            <person name="Grymonprez B."/>
            <person name="Weltjens I."/>
            <person name="Vanstreels E."/>
            <person name="Rieger M."/>
            <person name="Schaefer M."/>
            <person name="Mueller-Auer S."/>
            <person name="Gabel C."/>
            <person name="Fuchs M."/>
            <person name="Duesterhoeft A."/>
            <person name="Fritzc C."/>
            <person name="Holzer E."/>
            <person name="Moestl D."/>
            <person name="Hilbert H."/>
            <person name="Borzym K."/>
            <person name="Langer I."/>
            <person name="Beck A."/>
            <person name="Lehrach H."/>
            <person name="Reinhardt R."/>
            <person name="Pohl T.M."/>
            <person name="Eger P."/>
            <person name="Zimmermann W."/>
            <person name="Wedler H."/>
            <person name="Wambutt R."/>
            <person name="Purnelle B."/>
            <person name="Goffeau A."/>
            <person name="Cadieu E."/>
            <person name="Dreano S."/>
            <person name="Gloux S."/>
            <person name="Lelaure V."/>
            <person name="Mottier S."/>
            <person name="Galibert F."/>
            <person name="Aves S.J."/>
            <person name="Xiang Z."/>
            <person name="Hunt C."/>
            <person name="Moore K."/>
            <person name="Hurst S.M."/>
            <person name="Lucas M."/>
            <person name="Rochet M."/>
            <person name="Gaillardin C."/>
            <person name="Tallada V.A."/>
            <person name="Garzon A."/>
            <person name="Thode G."/>
            <person name="Daga R.R."/>
            <person name="Cruzado L."/>
            <person name="Jimenez J."/>
            <person name="Sanchez M."/>
            <person name="del Rey F."/>
            <person name="Benito J."/>
            <person name="Dominguez A."/>
            <person name="Revuelta J.L."/>
            <person name="Moreno S."/>
            <person name="Armstrong J."/>
            <person name="Forsburg S.L."/>
            <person name="Cerutti L."/>
            <person name="Lowe T."/>
            <person name="McCombie W.R."/>
            <person name="Paulsen I."/>
            <person name="Potashkin J."/>
            <person name="Shpakovski G.V."/>
            <person name="Ussery D."/>
            <person name="Barrell B.G."/>
            <person name="Nurse P."/>
        </authorList>
    </citation>
    <scope>NUCLEOTIDE SEQUENCE [LARGE SCALE GENOMIC DNA]</scope>
    <source>
        <strain>972 / ATCC 24843</strain>
    </source>
</reference>
<reference key="2">
    <citation type="journal article" date="2006" name="Nat. Biotechnol.">
        <title>ORFeome cloning and global analysis of protein localization in the fission yeast Schizosaccharomyces pombe.</title>
        <authorList>
            <person name="Matsuyama A."/>
            <person name="Arai R."/>
            <person name="Yashiroda Y."/>
            <person name="Shirai A."/>
            <person name="Kamata A."/>
            <person name="Sekido S."/>
            <person name="Kobayashi Y."/>
            <person name="Hashimoto A."/>
            <person name="Hamamoto M."/>
            <person name="Hiraoka Y."/>
            <person name="Horinouchi S."/>
            <person name="Yoshida M."/>
        </authorList>
    </citation>
    <scope>SUBCELLULAR LOCATION [LARGE SCALE ANALYSIS]</scope>
</reference>
<accession>Q9HDU4</accession>
<sequence>MTGDYKEYKGYALITGGAGFIGSNFLDYAVDKYPDFHFTCIDKLSYVSNYTTVFLSKVLNQPNFRFLEMDLATNYKFLYQFMVEDSEINKITHIINFAAESSVDRSFIDPLYFTKNNILSTQNLLECVRILLGKKEELRNRLNFVHVSTDEVYGEQDENASVDEKSKLNPTSPYAASKAAVDLIIQSYRYSYKISVTVIRANNVYGPRQYEEKLIPMTLGKLKKFINQKSQKIMQDKITLHGDGLHKRKYLHIYDFINAIDLVWMKQGSEVYHSTLESKMSGQIFNIGSDDEIDNLSLVKFICDYFLYRKLSLKNLDYSKYITFVQDRNYNDSRYSLNYEKIKSLGWRPQIPLETGLRKLIDEYY</sequence>
<evidence type="ECO:0000269" key="1">
    <source>
    </source>
</evidence>
<evidence type="ECO:0000305" key="2"/>
<name>YHEB_SCHPO</name>
<gene>
    <name type="ORF">SPBPB2B2.11</name>
</gene>
<organism>
    <name type="scientific">Schizosaccharomyces pombe (strain 972 / ATCC 24843)</name>
    <name type="common">Fission yeast</name>
    <dbReference type="NCBI Taxonomy" id="284812"/>
    <lineage>
        <taxon>Eukaryota</taxon>
        <taxon>Fungi</taxon>
        <taxon>Dikarya</taxon>
        <taxon>Ascomycota</taxon>
        <taxon>Taphrinomycotina</taxon>
        <taxon>Schizosaccharomycetes</taxon>
        <taxon>Schizosaccharomycetales</taxon>
        <taxon>Schizosaccharomycetaceae</taxon>
        <taxon>Schizosaccharomyces</taxon>
    </lineage>
</organism>
<proteinExistence type="inferred from homology"/>
<feature type="chain" id="PRO_0000318144" description="Uncharacterized protein PB2B2.11">
    <location>
        <begin position="1"/>
        <end position="365"/>
    </location>
</feature>
<keyword id="KW-0963">Cytoplasm</keyword>
<keyword id="KW-0539">Nucleus</keyword>
<keyword id="KW-1185">Reference proteome</keyword>
<comment type="subcellular location">
    <subcellularLocation>
        <location evidence="1">Cytoplasm</location>
    </subcellularLocation>
    <subcellularLocation>
        <location evidence="1">Nucleus</location>
    </subcellularLocation>
</comment>
<comment type="similarity">
    <text evidence="2">Belongs to the NAD(P)-dependent epimerase/dehydratase family.</text>
</comment>
<protein>
    <recommendedName>
        <fullName>Uncharacterized protein PB2B2.11</fullName>
    </recommendedName>
</protein>
<dbReference type="EMBL" id="CU329671">
    <property type="protein sequence ID" value="CAC21413.1"/>
    <property type="molecule type" value="Genomic_DNA"/>
</dbReference>
<dbReference type="SMR" id="Q9HDU4"/>
<dbReference type="BioGRID" id="277907">
    <property type="interactions" value="7"/>
</dbReference>
<dbReference type="FunCoup" id="Q9HDU4">
    <property type="interactions" value="125"/>
</dbReference>
<dbReference type="STRING" id="284812.Q9HDU4"/>
<dbReference type="PaxDb" id="4896-SPBPB2B2.11.1"/>
<dbReference type="EnsemblFungi" id="SPBPB2B2.11.1">
    <property type="protein sequence ID" value="SPBPB2B2.11.1:pep"/>
    <property type="gene ID" value="SPBPB2B2.11"/>
</dbReference>
<dbReference type="KEGG" id="spo:2541398"/>
<dbReference type="PomBase" id="SPBPB2B2.11"/>
<dbReference type="VEuPathDB" id="FungiDB:SPBPB2B2.11"/>
<dbReference type="eggNOG" id="KOG0747">
    <property type="taxonomic scope" value="Eukaryota"/>
</dbReference>
<dbReference type="HOGENOM" id="CLU_007383_1_14_1"/>
<dbReference type="InParanoid" id="Q9HDU4"/>
<dbReference type="OMA" id="KLIPLMC"/>
<dbReference type="PhylomeDB" id="Q9HDU4"/>
<dbReference type="PRO" id="PR:Q9HDU4"/>
<dbReference type="Proteomes" id="UP000002485">
    <property type="component" value="Chromosome II"/>
</dbReference>
<dbReference type="GO" id="GO:0005829">
    <property type="term" value="C:cytosol"/>
    <property type="evidence" value="ECO:0007005"/>
    <property type="project" value="PomBase"/>
</dbReference>
<dbReference type="GO" id="GO:0005634">
    <property type="term" value="C:nucleus"/>
    <property type="evidence" value="ECO:0007005"/>
    <property type="project" value="PomBase"/>
</dbReference>
<dbReference type="GO" id="GO:0008460">
    <property type="term" value="F:dTDP-glucose 4,6-dehydratase activity"/>
    <property type="evidence" value="ECO:0000318"/>
    <property type="project" value="GO_Central"/>
</dbReference>
<dbReference type="GO" id="GO:0016491">
    <property type="term" value="F:oxidoreductase activity"/>
    <property type="evidence" value="ECO:0007669"/>
    <property type="project" value="InterPro"/>
</dbReference>
<dbReference type="GO" id="GO:0009225">
    <property type="term" value="P:nucleotide-sugar metabolic process"/>
    <property type="evidence" value="ECO:0000305"/>
    <property type="project" value="PomBase"/>
</dbReference>
<dbReference type="FunFam" id="3.40.50.720:FF:000304">
    <property type="entry name" value="UDP-glucose 4,6-dehydratase"/>
    <property type="match status" value="1"/>
</dbReference>
<dbReference type="Gene3D" id="3.40.50.720">
    <property type="entry name" value="NAD(P)-binding Rossmann-like Domain"/>
    <property type="match status" value="1"/>
</dbReference>
<dbReference type="Gene3D" id="3.90.25.10">
    <property type="entry name" value="UDP-galactose 4-epimerase, domain 1"/>
    <property type="match status" value="1"/>
</dbReference>
<dbReference type="InterPro" id="IPR016040">
    <property type="entry name" value="NAD(P)-bd_dom"/>
</dbReference>
<dbReference type="InterPro" id="IPR036291">
    <property type="entry name" value="NAD(P)-bd_dom_sf"/>
</dbReference>
<dbReference type="InterPro" id="IPR020904">
    <property type="entry name" value="Sc_DH/Rdtase_CS"/>
</dbReference>
<dbReference type="PANTHER" id="PTHR43000">
    <property type="entry name" value="DTDP-D-GLUCOSE 4,6-DEHYDRATASE-RELATED"/>
    <property type="match status" value="1"/>
</dbReference>
<dbReference type="Pfam" id="PF16363">
    <property type="entry name" value="GDP_Man_Dehyd"/>
    <property type="match status" value="1"/>
</dbReference>
<dbReference type="SUPFAM" id="SSF51735">
    <property type="entry name" value="NAD(P)-binding Rossmann-fold domains"/>
    <property type="match status" value="1"/>
</dbReference>